<proteinExistence type="inferred from homology"/>
<sequence>MAREYKIEDYRNFGIMAHIDAGKTTTTERILYYTGKSHKIGEVHDGAATMDWMEQEQERGITITSAATTTFWKGRDGKMRRFNIIDTPGHVDFTIEVERSLRVLDGAIALLDANAGVEPQTETVWRQAEKYNVPRMIFCNKMDKTGADFYRSVEMIKTRLGATAVVMQLPIGAESDFKGVVDLVEMNALIWRDESLGAQWDVVEIPDDLKAKAEEYREKLIETVVEIDEAAMEAYLEGNMPDNDKIRELVRRGTIDVKFHPMFCGTAFKNKGVQPLLDAVVDYLPSPLDIPAIKGIDFKTEADIERHADDAEPLSMLAFKIMNDPFVGSLTFARIYSGKLEKGSSVLNTVKDKRERVGRMLQMHSNSREDIEEAFAGDIVALAGLKETTTGDTLCDPLKPVILERMEFPEPVIQIAIEPKSKGDQEKMGLALNRLAAEDPSFRVKTDQESGQTIIAGMGELHLDIIVDRMRREFKVEANVGAPQVAYRETITRQTEEDYTHKKQTGGTGQFARVKIIFEPNPEGEDFKFESKIVGGAVPKEYIPGVQKGIESVLSSGPLAGFPMLGVKATLIDGAFHDVDSSVLAFEIASRACFREAAKKAGAQLLEPMMKVEVVTPEDYVGDVIGDLNSRRGQIQGQESRGIAVVISANVPLANMFKYVDNLRSMSQGRAQYTMTFDHYAPVPSNVATEIQAKYSGQK</sequence>
<accession>Q2K9L9</accession>
<organism>
    <name type="scientific">Rhizobium etli (strain ATCC 51251 / DSM 11541 / JCM 21823 / NBRC 15573 / CFN 42)</name>
    <dbReference type="NCBI Taxonomy" id="347834"/>
    <lineage>
        <taxon>Bacteria</taxon>
        <taxon>Pseudomonadati</taxon>
        <taxon>Pseudomonadota</taxon>
        <taxon>Alphaproteobacteria</taxon>
        <taxon>Hyphomicrobiales</taxon>
        <taxon>Rhizobiaceae</taxon>
        <taxon>Rhizobium/Agrobacterium group</taxon>
        <taxon>Rhizobium</taxon>
    </lineage>
</organism>
<dbReference type="EMBL" id="CP000133">
    <property type="protein sequence ID" value="ABC90467.1"/>
    <property type="molecule type" value="Genomic_DNA"/>
</dbReference>
<dbReference type="RefSeq" id="WP_011424979.1">
    <property type="nucleotide sequence ID" value="NC_007761.1"/>
</dbReference>
<dbReference type="SMR" id="Q2K9L9"/>
<dbReference type="KEGG" id="ret:RHE_CH01672"/>
<dbReference type="eggNOG" id="COG0480">
    <property type="taxonomic scope" value="Bacteria"/>
</dbReference>
<dbReference type="HOGENOM" id="CLU_002794_4_1_5"/>
<dbReference type="OrthoDB" id="9802948at2"/>
<dbReference type="Proteomes" id="UP000001936">
    <property type="component" value="Chromosome"/>
</dbReference>
<dbReference type="GO" id="GO:0005737">
    <property type="term" value="C:cytoplasm"/>
    <property type="evidence" value="ECO:0007669"/>
    <property type="project" value="UniProtKB-SubCell"/>
</dbReference>
<dbReference type="GO" id="GO:0005525">
    <property type="term" value="F:GTP binding"/>
    <property type="evidence" value="ECO:0007669"/>
    <property type="project" value="UniProtKB-UniRule"/>
</dbReference>
<dbReference type="GO" id="GO:0003924">
    <property type="term" value="F:GTPase activity"/>
    <property type="evidence" value="ECO:0007669"/>
    <property type="project" value="InterPro"/>
</dbReference>
<dbReference type="GO" id="GO:0003746">
    <property type="term" value="F:translation elongation factor activity"/>
    <property type="evidence" value="ECO:0007669"/>
    <property type="project" value="UniProtKB-UniRule"/>
</dbReference>
<dbReference type="GO" id="GO:0032790">
    <property type="term" value="P:ribosome disassembly"/>
    <property type="evidence" value="ECO:0007669"/>
    <property type="project" value="TreeGrafter"/>
</dbReference>
<dbReference type="CDD" id="cd01886">
    <property type="entry name" value="EF-G"/>
    <property type="match status" value="1"/>
</dbReference>
<dbReference type="CDD" id="cd16262">
    <property type="entry name" value="EFG_III"/>
    <property type="match status" value="1"/>
</dbReference>
<dbReference type="CDD" id="cd01434">
    <property type="entry name" value="EFG_mtEFG1_IV"/>
    <property type="match status" value="1"/>
</dbReference>
<dbReference type="CDD" id="cd03713">
    <property type="entry name" value="EFG_mtEFG_C"/>
    <property type="match status" value="1"/>
</dbReference>
<dbReference type="CDD" id="cd04088">
    <property type="entry name" value="EFG_mtEFG_II"/>
    <property type="match status" value="1"/>
</dbReference>
<dbReference type="FunFam" id="2.40.30.10:FF:000006">
    <property type="entry name" value="Elongation factor G"/>
    <property type="match status" value="1"/>
</dbReference>
<dbReference type="FunFam" id="3.30.230.10:FF:000003">
    <property type="entry name" value="Elongation factor G"/>
    <property type="match status" value="1"/>
</dbReference>
<dbReference type="FunFam" id="3.30.70.240:FF:000001">
    <property type="entry name" value="Elongation factor G"/>
    <property type="match status" value="1"/>
</dbReference>
<dbReference type="FunFam" id="3.30.70.870:FF:000001">
    <property type="entry name" value="Elongation factor G"/>
    <property type="match status" value="1"/>
</dbReference>
<dbReference type="FunFam" id="3.40.50.300:FF:000029">
    <property type="entry name" value="Elongation factor G"/>
    <property type="match status" value="1"/>
</dbReference>
<dbReference type="Gene3D" id="3.30.230.10">
    <property type="match status" value="1"/>
</dbReference>
<dbReference type="Gene3D" id="3.30.70.240">
    <property type="match status" value="1"/>
</dbReference>
<dbReference type="Gene3D" id="3.30.70.870">
    <property type="entry name" value="Elongation Factor G (Translational Gtpase), domain 3"/>
    <property type="match status" value="1"/>
</dbReference>
<dbReference type="Gene3D" id="3.40.50.300">
    <property type="entry name" value="P-loop containing nucleotide triphosphate hydrolases"/>
    <property type="match status" value="1"/>
</dbReference>
<dbReference type="Gene3D" id="2.40.30.10">
    <property type="entry name" value="Translation factors"/>
    <property type="match status" value="1"/>
</dbReference>
<dbReference type="HAMAP" id="MF_00054_B">
    <property type="entry name" value="EF_G_EF_2_B"/>
    <property type="match status" value="1"/>
</dbReference>
<dbReference type="InterPro" id="IPR053905">
    <property type="entry name" value="EF-G-like_DII"/>
</dbReference>
<dbReference type="InterPro" id="IPR041095">
    <property type="entry name" value="EFG_II"/>
</dbReference>
<dbReference type="InterPro" id="IPR009022">
    <property type="entry name" value="EFG_III"/>
</dbReference>
<dbReference type="InterPro" id="IPR035647">
    <property type="entry name" value="EFG_III/V"/>
</dbReference>
<dbReference type="InterPro" id="IPR047872">
    <property type="entry name" value="EFG_IV"/>
</dbReference>
<dbReference type="InterPro" id="IPR035649">
    <property type="entry name" value="EFG_V"/>
</dbReference>
<dbReference type="InterPro" id="IPR000640">
    <property type="entry name" value="EFG_V-like"/>
</dbReference>
<dbReference type="InterPro" id="IPR031157">
    <property type="entry name" value="G_TR_CS"/>
</dbReference>
<dbReference type="InterPro" id="IPR027417">
    <property type="entry name" value="P-loop_NTPase"/>
</dbReference>
<dbReference type="InterPro" id="IPR020568">
    <property type="entry name" value="Ribosomal_Su5_D2-typ_SF"/>
</dbReference>
<dbReference type="InterPro" id="IPR014721">
    <property type="entry name" value="Ribsml_uS5_D2-typ_fold_subgr"/>
</dbReference>
<dbReference type="InterPro" id="IPR005225">
    <property type="entry name" value="Small_GTP-bd"/>
</dbReference>
<dbReference type="InterPro" id="IPR000795">
    <property type="entry name" value="T_Tr_GTP-bd_dom"/>
</dbReference>
<dbReference type="InterPro" id="IPR009000">
    <property type="entry name" value="Transl_B-barrel_sf"/>
</dbReference>
<dbReference type="InterPro" id="IPR004540">
    <property type="entry name" value="Transl_elong_EFG/EF2"/>
</dbReference>
<dbReference type="InterPro" id="IPR005517">
    <property type="entry name" value="Transl_elong_EFG/EF2_IV"/>
</dbReference>
<dbReference type="NCBIfam" id="TIGR00484">
    <property type="entry name" value="EF-G"/>
    <property type="match status" value="1"/>
</dbReference>
<dbReference type="NCBIfam" id="NF009381">
    <property type="entry name" value="PRK12740.1-5"/>
    <property type="match status" value="1"/>
</dbReference>
<dbReference type="NCBIfam" id="TIGR00231">
    <property type="entry name" value="small_GTP"/>
    <property type="match status" value="1"/>
</dbReference>
<dbReference type="PANTHER" id="PTHR43261:SF1">
    <property type="entry name" value="RIBOSOME-RELEASING FACTOR 2, MITOCHONDRIAL"/>
    <property type="match status" value="1"/>
</dbReference>
<dbReference type="PANTHER" id="PTHR43261">
    <property type="entry name" value="TRANSLATION ELONGATION FACTOR G-RELATED"/>
    <property type="match status" value="1"/>
</dbReference>
<dbReference type="Pfam" id="PF22042">
    <property type="entry name" value="EF-G_D2"/>
    <property type="match status" value="1"/>
</dbReference>
<dbReference type="Pfam" id="PF00679">
    <property type="entry name" value="EFG_C"/>
    <property type="match status" value="1"/>
</dbReference>
<dbReference type="Pfam" id="PF14492">
    <property type="entry name" value="EFG_III"/>
    <property type="match status" value="1"/>
</dbReference>
<dbReference type="Pfam" id="PF03764">
    <property type="entry name" value="EFG_IV"/>
    <property type="match status" value="1"/>
</dbReference>
<dbReference type="Pfam" id="PF00009">
    <property type="entry name" value="GTP_EFTU"/>
    <property type="match status" value="1"/>
</dbReference>
<dbReference type="PRINTS" id="PR00315">
    <property type="entry name" value="ELONGATNFCT"/>
</dbReference>
<dbReference type="SMART" id="SM00838">
    <property type="entry name" value="EFG_C"/>
    <property type="match status" value="1"/>
</dbReference>
<dbReference type="SMART" id="SM00889">
    <property type="entry name" value="EFG_IV"/>
    <property type="match status" value="1"/>
</dbReference>
<dbReference type="SUPFAM" id="SSF54980">
    <property type="entry name" value="EF-G C-terminal domain-like"/>
    <property type="match status" value="2"/>
</dbReference>
<dbReference type="SUPFAM" id="SSF52540">
    <property type="entry name" value="P-loop containing nucleoside triphosphate hydrolases"/>
    <property type="match status" value="1"/>
</dbReference>
<dbReference type="SUPFAM" id="SSF54211">
    <property type="entry name" value="Ribosomal protein S5 domain 2-like"/>
    <property type="match status" value="1"/>
</dbReference>
<dbReference type="SUPFAM" id="SSF50447">
    <property type="entry name" value="Translation proteins"/>
    <property type="match status" value="1"/>
</dbReference>
<dbReference type="PROSITE" id="PS00301">
    <property type="entry name" value="G_TR_1"/>
    <property type="match status" value="1"/>
</dbReference>
<dbReference type="PROSITE" id="PS51722">
    <property type="entry name" value="G_TR_2"/>
    <property type="match status" value="1"/>
</dbReference>
<reference key="1">
    <citation type="journal article" date="2006" name="Proc. Natl. Acad. Sci. U.S.A.">
        <title>The partitioned Rhizobium etli genome: genetic and metabolic redundancy in seven interacting replicons.</title>
        <authorList>
            <person name="Gonzalez V."/>
            <person name="Santamaria R.I."/>
            <person name="Bustos P."/>
            <person name="Hernandez-Gonzalez I."/>
            <person name="Medrano-Soto A."/>
            <person name="Moreno-Hagelsieb G."/>
            <person name="Janga S.C."/>
            <person name="Ramirez M.A."/>
            <person name="Jimenez-Jacinto V."/>
            <person name="Collado-Vides J."/>
            <person name="Davila G."/>
        </authorList>
    </citation>
    <scope>NUCLEOTIDE SEQUENCE [LARGE SCALE GENOMIC DNA]</scope>
    <source>
        <strain>ATCC 51251 / DSM 11541 / JCM 21823 / NBRC 15573 / CFN 42</strain>
    </source>
</reference>
<comment type="function">
    <text evidence="1">Catalyzes the GTP-dependent ribosomal translocation step during translation elongation. During this step, the ribosome changes from the pre-translocational (PRE) to the post-translocational (POST) state as the newly formed A-site-bound peptidyl-tRNA and P-site-bound deacylated tRNA move to the P and E sites, respectively. Catalyzes the coordinated movement of the two tRNA molecules, the mRNA and conformational changes in the ribosome.</text>
</comment>
<comment type="subcellular location">
    <subcellularLocation>
        <location evidence="1">Cytoplasm</location>
    </subcellularLocation>
</comment>
<comment type="similarity">
    <text evidence="1">Belongs to the TRAFAC class translation factor GTPase superfamily. Classic translation factor GTPase family. EF-G/EF-2 subfamily.</text>
</comment>
<evidence type="ECO:0000255" key="1">
    <source>
        <dbReference type="HAMAP-Rule" id="MF_00054"/>
    </source>
</evidence>
<gene>
    <name evidence="1" type="primary">fusA</name>
    <name type="ordered locus">RHE_CH01672</name>
</gene>
<feature type="chain" id="PRO_0000263489" description="Elongation factor G">
    <location>
        <begin position="1"/>
        <end position="699"/>
    </location>
</feature>
<feature type="domain" description="tr-type G">
    <location>
        <begin position="8"/>
        <end position="288"/>
    </location>
</feature>
<feature type="binding site" evidence="1">
    <location>
        <begin position="17"/>
        <end position="24"/>
    </location>
    <ligand>
        <name>GTP</name>
        <dbReference type="ChEBI" id="CHEBI:37565"/>
    </ligand>
</feature>
<feature type="binding site" evidence="1">
    <location>
        <begin position="86"/>
        <end position="90"/>
    </location>
    <ligand>
        <name>GTP</name>
        <dbReference type="ChEBI" id="CHEBI:37565"/>
    </ligand>
</feature>
<feature type="binding site" evidence="1">
    <location>
        <begin position="140"/>
        <end position="143"/>
    </location>
    <ligand>
        <name>GTP</name>
        <dbReference type="ChEBI" id="CHEBI:37565"/>
    </ligand>
</feature>
<protein>
    <recommendedName>
        <fullName evidence="1">Elongation factor G</fullName>
        <shortName evidence="1">EF-G</shortName>
    </recommendedName>
</protein>
<keyword id="KW-0963">Cytoplasm</keyword>
<keyword id="KW-0251">Elongation factor</keyword>
<keyword id="KW-0342">GTP-binding</keyword>
<keyword id="KW-0547">Nucleotide-binding</keyword>
<keyword id="KW-0648">Protein biosynthesis</keyword>
<keyword id="KW-1185">Reference proteome</keyword>
<name>EFG_RHIEC</name>